<name>RL7_THEM4</name>
<dbReference type="EMBL" id="CP000716">
    <property type="protein sequence ID" value="ABR30370.1"/>
    <property type="molecule type" value="Genomic_DNA"/>
</dbReference>
<dbReference type="RefSeq" id="WP_012056731.1">
    <property type="nucleotide sequence ID" value="NC_009616.1"/>
</dbReference>
<dbReference type="SMR" id="A6LKB9"/>
<dbReference type="STRING" id="391009.Tmel_0503"/>
<dbReference type="KEGG" id="tme:Tmel_0503"/>
<dbReference type="eggNOG" id="COG0222">
    <property type="taxonomic scope" value="Bacteria"/>
</dbReference>
<dbReference type="HOGENOM" id="CLU_086499_3_2_0"/>
<dbReference type="Proteomes" id="UP000001110">
    <property type="component" value="Chromosome"/>
</dbReference>
<dbReference type="GO" id="GO:0022625">
    <property type="term" value="C:cytosolic large ribosomal subunit"/>
    <property type="evidence" value="ECO:0007669"/>
    <property type="project" value="TreeGrafter"/>
</dbReference>
<dbReference type="GO" id="GO:0003729">
    <property type="term" value="F:mRNA binding"/>
    <property type="evidence" value="ECO:0007669"/>
    <property type="project" value="TreeGrafter"/>
</dbReference>
<dbReference type="GO" id="GO:0003735">
    <property type="term" value="F:structural constituent of ribosome"/>
    <property type="evidence" value="ECO:0007669"/>
    <property type="project" value="InterPro"/>
</dbReference>
<dbReference type="GO" id="GO:0006412">
    <property type="term" value="P:translation"/>
    <property type="evidence" value="ECO:0007669"/>
    <property type="project" value="UniProtKB-UniRule"/>
</dbReference>
<dbReference type="CDD" id="cd00387">
    <property type="entry name" value="Ribosomal_L7_L12"/>
    <property type="match status" value="1"/>
</dbReference>
<dbReference type="FunFam" id="3.30.1390.10:FF:000001">
    <property type="entry name" value="50S ribosomal protein L7/L12"/>
    <property type="match status" value="1"/>
</dbReference>
<dbReference type="Gene3D" id="3.30.1390.10">
    <property type="match status" value="1"/>
</dbReference>
<dbReference type="Gene3D" id="1.20.5.710">
    <property type="entry name" value="Single helix bin"/>
    <property type="match status" value="1"/>
</dbReference>
<dbReference type="HAMAP" id="MF_00368">
    <property type="entry name" value="Ribosomal_bL12"/>
    <property type="match status" value="1"/>
</dbReference>
<dbReference type="InterPro" id="IPR000206">
    <property type="entry name" value="Ribosomal_bL12"/>
</dbReference>
<dbReference type="InterPro" id="IPR013823">
    <property type="entry name" value="Ribosomal_bL12_C"/>
</dbReference>
<dbReference type="InterPro" id="IPR014719">
    <property type="entry name" value="Ribosomal_bL12_C/ClpS-like"/>
</dbReference>
<dbReference type="InterPro" id="IPR008932">
    <property type="entry name" value="Ribosomal_bL12_oligo"/>
</dbReference>
<dbReference type="InterPro" id="IPR036235">
    <property type="entry name" value="Ribosomal_bL12_oligo_N_sf"/>
</dbReference>
<dbReference type="NCBIfam" id="TIGR00855">
    <property type="entry name" value="L12"/>
    <property type="match status" value="1"/>
</dbReference>
<dbReference type="PANTHER" id="PTHR45987">
    <property type="entry name" value="39S RIBOSOMAL PROTEIN L12"/>
    <property type="match status" value="1"/>
</dbReference>
<dbReference type="PANTHER" id="PTHR45987:SF4">
    <property type="entry name" value="LARGE RIBOSOMAL SUBUNIT PROTEIN BL12M"/>
    <property type="match status" value="1"/>
</dbReference>
<dbReference type="Pfam" id="PF00542">
    <property type="entry name" value="Ribosomal_L12"/>
    <property type="match status" value="1"/>
</dbReference>
<dbReference type="Pfam" id="PF16320">
    <property type="entry name" value="Ribosomal_L12_N"/>
    <property type="match status" value="1"/>
</dbReference>
<dbReference type="SUPFAM" id="SSF54736">
    <property type="entry name" value="ClpS-like"/>
    <property type="match status" value="1"/>
</dbReference>
<dbReference type="SUPFAM" id="SSF48300">
    <property type="entry name" value="Ribosomal protein L7/12, oligomerisation (N-terminal) domain"/>
    <property type="match status" value="1"/>
</dbReference>
<feature type="chain" id="PRO_1000059931" description="Large ribosomal subunit protein bL12">
    <location>
        <begin position="1"/>
        <end position="129"/>
    </location>
</feature>
<sequence length="129" mass="13663">MEKLEQIVNEIEQLTVAELAELVKMLEDKFGVSASAPVMAMPVAGAAAGGGAAAEEKTEFDVVLKSFGAKKINVIKVVREITGLGLKEAKDLVEKAGTPDAVIKQGVNKDEAEEIKKKLEEAGAEVELK</sequence>
<proteinExistence type="inferred from homology"/>
<evidence type="ECO:0000255" key="1">
    <source>
        <dbReference type="HAMAP-Rule" id="MF_00368"/>
    </source>
</evidence>
<evidence type="ECO:0000305" key="2"/>
<comment type="function">
    <text evidence="1">Forms part of the ribosomal stalk which helps the ribosome interact with GTP-bound translation factors. Is thus essential for accurate translation.</text>
</comment>
<comment type="subunit">
    <text evidence="1">Homodimer. Part of the ribosomal stalk of the 50S ribosomal subunit. Forms a multimeric L10(L12)X complex, where L10 forms an elongated spine to which 2 to 4 L12 dimers bind in a sequential fashion. Binds GTP-bound translation factors.</text>
</comment>
<comment type="similarity">
    <text evidence="1">Belongs to the bacterial ribosomal protein bL12 family.</text>
</comment>
<accession>A6LKB9</accession>
<reference key="1">
    <citation type="submission" date="2007-05" db="EMBL/GenBank/DDBJ databases">
        <title>Complete sequence of Thermosipho melanesiensis BI429.</title>
        <authorList>
            <consortium name="US DOE Joint Genome Institute"/>
            <person name="Copeland A."/>
            <person name="Lucas S."/>
            <person name="Lapidus A."/>
            <person name="Barry K."/>
            <person name="Glavina del Rio T."/>
            <person name="Dalin E."/>
            <person name="Tice H."/>
            <person name="Pitluck S."/>
            <person name="Chertkov O."/>
            <person name="Brettin T."/>
            <person name="Bruce D."/>
            <person name="Detter J.C."/>
            <person name="Han C."/>
            <person name="Schmutz J."/>
            <person name="Larimer F."/>
            <person name="Land M."/>
            <person name="Hauser L."/>
            <person name="Kyrpides N."/>
            <person name="Mikhailova N."/>
            <person name="Nelson K."/>
            <person name="Gogarten J.P."/>
            <person name="Noll K."/>
            <person name="Richardson P."/>
        </authorList>
    </citation>
    <scope>NUCLEOTIDE SEQUENCE [LARGE SCALE GENOMIC DNA]</scope>
    <source>
        <strain>DSM 12029 / CIP 104789 / BI429</strain>
    </source>
</reference>
<gene>
    <name evidence="1" type="primary">rplL</name>
    <name type="ordered locus">Tmel_0503</name>
</gene>
<organism>
    <name type="scientific">Thermosipho melanesiensis (strain DSM 12029 / CIP 104789 / BI429)</name>
    <dbReference type="NCBI Taxonomy" id="391009"/>
    <lineage>
        <taxon>Bacteria</taxon>
        <taxon>Thermotogati</taxon>
        <taxon>Thermotogota</taxon>
        <taxon>Thermotogae</taxon>
        <taxon>Thermotogales</taxon>
        <taxon>Fervidobacteriaceae</taxon>
        <taxon>Thermosipho</taxon>
    </lineage>
</organism>
<keyword id="KW-0687">Ribonucleoprotein</keyword>
<keyword id="KW-0689">Ribosomal protein</keyword>
<protein>
    <recommendedName>
        <fullName evidence="1">Large ribosomal subunit protein bL12</fullName>
    </recommendedName>
    <alternativeName>
        <fullName evidence="2">50S ribosomal protein L7/L12</fullName>
    </alternativeName>
</protein>